<sequence length="193" mass="22931">MNFLAHLHLAHLADSSLSGNLLADFVRGNPATHYPPDVVEGIYMHRRIDVMTDNLPEVREAREWFRHETRRVAPITLDVMWDHFLSRHWTQISPDFPLQAFVAYAHAQVATILPDSPPRFVNLNDYLWSEKWLERYRDMDFIQNVLNGMANRRPRLDALRDSWYDLDAHYDALEERFWHFYPRMMAQAARKAL</sequence>
<dbReference type="EC" id="3.1.4.14" evidence="1"/>
<dbReference type="EMBL" id="CP001144">
    <property type="protein sequence ID" value="ACH74541.1"/>
    <property type="molecule type" value="Genomic_DNA"/>
</dbReference>
<dbReference type="RefSeq" id="WP_001009855.1">
    <property type="nucleotide sequence ID" value="NC_011205.1"/>
</dbReference>
<dbReference type="SMR" id="B5FKQ8"/>
<dbReference type="KEGG" id="sed:SeD_A0443"/>
<dbReference type="HOGENOM" id="CLU_099370_1_0_6"/>
<dbReference type="Proteomes" id="UP000008322">
    <property type="component" value="Chromosome"/>
</dbReference>
<dbReference type="GO" id="GO:0008770">
    <property type="term" value="F:[acyl-carrier-protein] phosphodiesterase activity"/>
    <property type="evidence" value="ECO:0007669"/>
    <property type="project" value="UniProtKB-UniRule"/>
</dbReference>
<dbReference type="GO" id="GO:0006633">
    <property type="term" value="P:fatty acid biosynthetic process"/>
    <property type="evidence" value="ECO:0007669"/>
    <property type="project" value="UniProtKB-UniRule"/>
</dbReference>
<dbReference type="HAMAP" id="MF_01950">
    <property type="entry name" value="AcpH"/>
    <property type="match status" value="1"/>
</dbReference>
<dbReference type="InterPro" id="IPR007431">
    <property type="entry name" value="ACP_PD"/>
</dbReference>
<dbReference type="InterPro" id="IPR023491">
    <property type="entry name" value="ACP_phosphodiesterase_gpbac"/>
</dbReference>
<dbReference type="NCBIfam" id="NF007466">
    <property type="entry name" value="PRK10045.1"/>
    <property type="match status" value="1"/>
</dbReference>
<dbReference type="PANTHER" id="PTHR38764">
    <property type="entry name" value="ACYL CARRIER PROTEIN PHOSPHODIESTERASE"/>
    <property type="match status" value="1"/>
</dbReference>
<dbReference type="PANTHER" id="PTHR38764:SF1">
    <property type="entry name" value="ACYL CARRIER PROTEIN PHOSPHODIESTERASE"/>
    <property type="match status" value="1"/>
</dbReference>
<dbReference type="Pfam" id="PF04336">
    <property type="entry name" value="ACP_PD"/>
    <property type="match status" value="1"/>
</dbReference>
<dbReference type="PIRSF" id="PIRSF011489">
    <property type="entry name" value="DUF479"/>
    <property type="match status" value="1"/>
</dbReference>
<protein>
    <recommendedName>
        <fullName evidence="1">Acyl carrier protein phosphodiesterase</fullName>
        <shortName evidence="1">ACP phosphodiesterase</shortName>
        <ecNumber evidence="1">3.1.4.14</ecNumber>
    </recommendedName>
</protein>
<organism>
    <name type="scientific">Salmonella dublin (strain CT_02021853)</name>
    <dbReference type="NCBI Taxonomy" id="439851"/>
    <lineage>
        <taxon>Bacteria</taxon>
        <taxon>Pseudomonadati</taxon>
        <taxon>Pseudomonadota</taxon>
        <taxon>Gammaproteobacteria</taxon>
        <taxon>Enterobacterales</taxon>
        <taxon>Enterobacteriaceae</taxon>
        <taxon>Salmonella</taxon>
    </lineage>
</organism>
<reference key="1">
    <citation type="journal article" date="2011" name="J. Bacteriol.">
        <title>Comparative genomics of 28 Salmonella enterica isolates: evidence for CRISPR-mediated adaptive sublineage evolution.</title>
        <authorList>
            <person name="Fricke W.F."/>
            <person name="Mammel M.K."/>
            <person name="McDermott P.F."/>
            <person name="Tartera C."/>
            <person name="White D.G."/>
            <person name="Leclerc J.E."/>
            <person name="Ravel J."/>
            <person name="Cebula T.A."/>
        </authorList>
    </citation>
    <scope>NUCLEOTIDE SEQUENCE [LARGE SCALE GENOMIC DNA]</scope>
    <source>
        <strain>CT_02021853</strain>
    </source>
</reference>
<keyword id="KW-0275">Fatty acid biosynthesis</keyword>
<keyword id="KW-0276">Fatty acid metabolism</keyword>
<keyword id="KW-0378">Hydrolase</keyword>
<keyword id="KW-0444">Lipid biosynthesis</keyword>
<keyword id="KW-0443">Lipid metabolism</keyword>
<proteinExistence type="inferred from homology"/>
<comment type="function">
    <text evidence="1">Converts holo-ACP to apo-ACP by hydrolytic cleavage of the phosphopantetheine prosthetic group from ACP.</text>
</comment>
<comment type="catalytic activity">
    <reaction evidence="1">
        <text>holo-[ACP] + H2O = apo-[ACP] + (R)-4'-phosphopantetheine + H(+)</text>
        <dbReference type="Rhea" id="RHEA:20537"/>
        <dbReference type="Rhea" id="RHEA-COMP:9685"/>
        <dbReference type="Rhea" id="RHEA-COMP:9690"/>
        <dbReference type="ChEBI" id="CHEBI:15377"/>
        <dbReference type="ChEBI" id="CHEBI:15378"/>
        <dbReference type="ChEBI" id="CHEBI:29999"/>
        <dbReference type="ChEBI" id="CHEBI:61723"/>
        <dbReference type="ChEBI" id="CHEBI:64479"/>
        <dbReference type="EC" id="3.1.4.14"/>
    </reaction>
</comment>
<comment type="similarity">
    <text evidence="1">Belongs to the AcpH family.</text>
</comment>
<name>ACPH_SALDC</name>
<gene>
    <name evidence="1" type="primary">acpH</name>
    <name type="ordered locus">SeD_A0443</name>
</gene>
<feature type="chain" id="PRO_1000188811" description="Acyl carrier protein phosphodiesterase">
    <location>
        <begin position="1"/>
        <end position="193"/>
    </location>
</feature>
<accession>B5FKQ8</accession>
<evidence type="ECO:0000255" key="1">
    <source>
        <dbReference type="HAMAP-Rule" id="MF_01950"/>
    </source>
</evidence>